<accession>Q7V2R1</accession>
<name>RS4_PROMP</name>
<organism>
    <name type="scientific">Prochlorococcus marinus subsp. pastoris (strain CCMP1986 / NIES-2087 / MED4)</name>
    <dbReference type="NCBI Taxonomy" id="59919"/>
    <lineage>
        <taxon>Bacteria</taxon>
        <taxon>Bacillati</taxon>
        <taxon>Cyanobacteriota</taxon>
        <taxon>Cyanophyceae</taxon>
        <taxon>Synechococcales</taxon>
        <taxon>Prochlorococcaceae</taxon>
        <taxon>Prochlorococcus</taxon>
    </lineage>
</organism>
<proteinExistence type="inferred from homology"/>
<protein>
    <recommendedName>
        <fullName evidence="1">Small ribosomal subunit protein uS4</fullName>
    </recommendedName>
    <alternativeName>
        <fullName evidence="3">30S ribosomal protein S4</fullName>
    </alternativeName>
</protein>
<gene>
    <name evidence="1" type="primary">rpsD</name>
    <name evidence="1" type="synonym">rps4</name>
    <name type="ordered locus">PMM0410</name>
</gene>
<feature type="chain" id="PRO_0000132437" description="Small ribosomal subunit protein uS4">
    <location>
        <begin position="1"/>
        <end position="202"/>
    </location>
</feature>
<feature type="domain" description="S4 RNA-binding" evidence="1">
    <location>
        <begin position="90"/>
        <end position="152"/>
    </location>
</feature>
<feature type="region of interest" description="Disordered" evidence="2">
    <location>
        <begin position="1"/>
        <end position="42"/>
    </location>
</feature>
<feature type="compositionally biased region" description="Basic residues" evidence="2">
    <location>
        <begin position="1"/>
        <end position="13"/>
    </location>
</feature>
<keyword id="KW-0687">Ribonucleoprotein</keyword>
<keyword id="KW-0689">Ribosomal protein</keyword>
<keyword id="KW-0694">RNA-binding</keyword>
<keyword id="KW-0699">rRNA-binding</keyword>
<evidence type="ECO:0000255" key="1">
    <source>
        <dbReference type="HAMAP-Rule" id="MF_01306"/>
    </source>
</evidence>
<evidence type="ECO:0000256" key="2">
    <source>
        <dbReference type="SAM" id="MobiDB-lite"/>
    </source>
</evidence>
<evidence type="ECO:0000305" key="3"/>
<dbReference type="EMBL" id="BX548174">
    <property type="protein sequence ID" value="CAE18869.1"/>
    <property type="molecule type" value="Genomic_DNA"/>
</dbReference>
<dbReference type="RefSeq" id="WP_011132046.1">
    <property type="nucleotide sequence ID" value="NC_005072.1"/>
</dbReference>
<dbReference type="SMR" id="Q7V2R1"/>
<dbReference type="STRING" id="59919.PMM0410"/>
<dbReference type="KEGG" id="pmm:PMM0410"/>
<dbReference type="eggNOG" id="COG0522">
    <property type="taxonomic scope" value="Bacteria"/>
</dbReference>
<dbReference type="HOGENOM" id="CLU_092403_0_5_3"/>
<dbReference type="OrthoDB" id="9803672at2"/>
<dbReference type="Proteomes" id="UP000001026">
    <property type="component" value="Chromosome"/>
</dbReference>
<dbReference type="GO" id="GO:0015935">
    <property type="term" value="C:small ribosomal subunit"/>
    <property type="evidence" value="ECO:0007669"/>
    <property type="project" value="InterPro"/>
</dbReference>
<dbReference type="GO" id="GO:0019843">
    <property type="term" value="F:rRNA binding"/>
    <property type="evidence" value="ECO:0007669"/>
    <property type="project" value="UniProtKB-UniRule"/>
</dbReference>
<dbReference type="GO" id="GO:0003735">
    <property type="term" value="F:structural constituent of ribosome"/>
    <property type="evidence" value="ECO:0007669"/>
    <property type="project" value="InterPro"/>
</dbReference>
<dbReference type="GO" id="GO:0042274">
    <property type="term" value="P:ribosomal small subunit biogenesis"/>
    <property type="evidence" value="ECO:0007669"/>
    <property type="project" value="TreeGrafter"/>
</dbReference>
<dbReference type="GO" id="GO:0006412">
    <property type="term" value="P:translation"/>
    <property type="evidence" value="ECO:0007669"/>
    <property type="project" value="UniProtKB-UniRule"/>
</dbReference>
<dbReference type="CDD" id="cd00165">
    <property type="entry name" value="S4"/>
    <property type="match status" value="1"/>
</dbReference>
<dbReference type="FunFam" id="3.10.290.10:FF:000001">
    <property type="entry name" value="30S ribosomal protein S4"/>
    <property type="match status" value="1"/>
</dbReference>
<dbReference type="FunFam" id="1.10.1050.10:FF:000002">
    <property type="entry name" value="30S ribosomal protein S4, chloroplastic"/>
    <property type="match status" value="1"/>
</dbReference>
<dbReference type="Gene3D" id="1.10.1050.10">
    <property type="entry name" value="Ribosomal Protein S4 Delta 41, Chain A, domain 1"/>
    <property type="match status" value="1"/>
</dbReference>
<dbReference type="Gene3D" id="3.10.290.10">
    <property type="entry name" value="RNA-binding S4 domain"/>
    <property type="match status" value="1"/>
</dbReference>
<dbReference type="HAMAP" id="MF_01306_B">
    <property type="entry name" value="Ribosomal_uS4_B"/>
    <property type="match status" value="1"/>
</dbReference>
<dbReference type="InterPro" id="IPR022801">
    <property type="entry name" value="Ribosomal_uS4"/>
</dbReference>
<dbReference type="InterPro" id="IPR005709">
    <property type="entry name" value="Ribosomal_uS4_bac-type"/>
</dbReference>
<dbReference type="InterPro" id="IPR018079">
    <property type="entry name" value="Ribosomal_uS4_CS"/>
</dbReference>
<dbReference type="InterPro" id="IPR001912">
    <property type="entry name" value="Ribosomal_uS4_N"/>
</dbReference>
<dbReference type="InterPro" id="IPR002942">
    <property type="entry name" value="S4_RNA-bd"/>
</dbReference>
<dbReference type="InterPro" id="IPR036986">
    <property type="entry name" value="S4_RNA-bd_sf"/>
</dbReference>
<dbReference type="NCBIfam" id="NF003717">
    <property type="entry name" value="PRK05327.1"/>
    <property type="match status" value="1"/>
</dbReference>
<dbReference type="NCBIfam" id="TIGR01017">
    <property type="entry name" value="rpsD_bact"/>
    <property type="match status" value="1"/>
</dbReference>
<dbReference type="PANTHER" id="PTHR11831">
    <property type="entry name" value="30S 40S RIBOSOMAL PROTEIN"/>
    <property type="match status" value="1"/>
</dbReference>
<dbReference type="PANTHER" id="PTHR11831:SF4">
    <property type="entry name" value="SMALL RIBOSOMAL SUBUNIT PROTEIN US4M"/>
    <property type="match status" value="1"/>
</dbReference>
<dbReference type="Pfam" id="PF00163">
    <property type="entry name" value="Ribosomal_S4"/>
    <property type="match status" value="1"/>
</dbReference>
<dbReference type="Pfam" id="PF01479">
    <property type="entry name" value="S4"/>
    <property type="match status" value="1"/>
</dbReference>
<dbReference type="SMART" id="SM01390">
    <property type="entry name" value="Ribosomal_S4"/>
    <property type="match status" value="1"/>
</dbReference>
<dbReference type="SMART" id="SM00363">
    <property type="entry name" value="S4"/>
    <property type="match status" value="1"/>
</dbReference>
<dbReference type="SUPFAM" id="SSF55174">
    <property type="entry name" value="Alpha-L RNA-binding motif"/>
    <property type="match status" value="1"/>
</dbReference>
<dbReference type="PROSITE" id="PS00632">
    <property type="entry name" value="RIBOSOMAL_S4"/>
    <property type="match status" value="1"/>
</dbReference>
<dbReference type="PROSITE" id="PS50889">
    <property type="entry name" value="S4"/>
    <property type="match status" value="1"/>
</dbReference>
<reference key="1">
    <citation type="journal article" date="2003" name="Nature">
        <title>Genome divergence in two Prochlorococcus ecotypes reflects oceanic niche differentiation.</title>
        <authorList>
            <person name="Rocap G."/>
            <person name="Larimer F.W."/>
            <person name="Lamerdin J.E."/>
            <person name="Malfatti S."/>
            <person name="Chain P."/>
            <person name="Ahlgren N.A."/>
            <person name="Arellano A."/>
            <person name="Coleman M."/>
            <person name="Hauser L."/>
            <person name="Hess W.R."/>
            <person name="Johnson Z.I."/>
            <person name="Land M.L."/>
            <person name="Lindell D."/>
            <person name="Post A.F."/>
            <person name="Regala W."/>
            <person name="Shah M."/>
            <person name="Shaw S.L."/>
            <person name="Steglich C."/>
            <person name="Sullivan M.B."/>
            <person name="Ting C.S."/>
            <person name="Tolonen A."/>
            <person name="Webb E.A."/>
            <person name="Zinser E.R."/>
            <person name="Chisholm S.W."/>
        </authorList>
    </citation>
    <scope>NUCLEOTIDE SEQUENCE [LARGE SCALE GENOMIC DNA]</scope>
    <source>
        <strain>CCMP1986 / NIES-2087 / MED4</strain>
    </source>
</reference>
<comment type="function">
    <text evidence="1">One of the primary rRNA binding proteins, it binds directly to 16S rRNA where it nucleates assembly of the body of the 30S subunit.</text>
</comment>
<comment type="function">
    <text evidence="1">With S5 and S12 plays an important role in translational accuracy.</text>
</comment>
<comment type="subunit">
    <text evidence="1">Part of the 30S ribosomal subunit. Contacts protein S5. The interaction surface between S4 and S5 is involved in control of translational fidelity.</text>
</comment>
<comment type="similarity">
    <text evidence="1">Belongs to the universal ribosomal protein uS4 family.</text>
</comment>
<sequence length="202" mass="22856">MSRYRGPRLRVTRRLGELPGLTRKASKKSNPPGQHGQARRKRSEYAIRLEEKQKLRFNYGVSERQLVRYVKKARAQEGSTGTNLLRLLENRLDNVCFRLGFGGTIPGSRQLVNHGHVTINGKVLDIAGYQCKPGDVISIKENKASKKLVEGNIEFPGLANVPPHIELDKPKLTGKINGKCDREWVALEINELLVVEYYSRKV</sequence>